<comment type="function">
    <text evidence="1">Plays an important role in the de novo pathway of purine nucleotide biosynthesis. Catalyzes the first committed step in the biosynthesis of AMP from IMP.</text>
</comment>
<comment type="catalytic activity">
    <reaction evidence="1">
        <text>IMP + L-aspartate + GTP = N(6)-(1,2-dicarboxyethyl)-AMP + GDP + phosphate + 2 H(+)</text>
        <dbReference type="Rhea" id="RHEA:15753"/>
        <dbReference type="ChEBI" id="CHEBI:15378"/>
        <dbReference type="ChEBI" id="CHEBI:29991"/>
        <dbReference type="ChEBI" id="CHEBI:37565"/>
        <dbReference type="ChEBI" id="CHEBI:43474"/>
        <dbReference type="ChEBI" id="CHEBI:57567"/>
        <dbReference type="ChEBI" id="CHEBI:58053"/>
        <dbReference type="ChEBI" id="CHEBI:58189"/>
        <dbReference type="EC" id="6.3.4.4"/>
    </reaction>
</comment>
<comment type="cofactor">
    <cofactor evidence="1">
        <name>Mg(2+)</name>
        <dbReference type="ChEBI" id="CHEBI:18420"/>
    </cofactor>
    <text evidence="1">Binds 1 Mg(2+) ion per subunit.</text>
</comment>
<comment type="pathway">
    <text evidence="1">Purine metabolism; AMP biosynthesis via de novo pathway; AMP from IMP: step 1/2.</text>
</comment>
<comment type="subunit">
    <text evidence="1">Homodimer.</text>
</comment>
<comment type="subcellular location">
    <subcellularLocation>
        <location evidence="1">Cytoplasm</location>
    </subcellularLocation>
</comment>
<comment type="similarity">
    <text evidence="1">Belongs to the adenylosuccinate synthetase family.</text>
</comment>
<comment type="sequence caution" evidence="2">
    <conflict type="erroneous initiation">
        <sequence resource="EMBL-CDS" id="AAV86772"/>
    </conflict>
</comment>
<organism>
    <name type="scientific">Anaplasma marginale (strain St. Maries)</name>
    <dbReference type="NCBI Taxonomy" id="234826"/>
    <lineage>
        <taxon>Bacteria</taxon>
        <taxon>Pseudomonadati</taxon>
        <taxon>Pseudomonadota</taxon>
        <taxon>Alphaproteobacteria</taxon>
        <taxon>Rickettsiales</taxon>
        <taxon>Anaplasmataceae</taxon>
        <taxon>Anaplasma</taxon>
    </lineage>
</organism>
<evidence type="ECO:0000255" key="1">
    <source>
        <dbReference type="HAMAP-Rule" id="MF_00011"/>
    </source>
</evidence>
<evidence type="ECO:0000305" key="2"/>
<name>PURA_ANAMM</name>
<dbReference type="EC" id="6.3.4.4" evidence="1"/>
<dbReference type="EMBL" id="CP000030">
    <property type="protein sequence ID" value="AAV86772.1"/>
    <property type="status" value="ALT_INIT"/>
    <property type="molecule type" value="Genomic_DNA"/>
</dbReference>
<dbReference type="RefSeq" id="WP_029209820.1">
    <property type="nucleotide sequence ID" value="NC_004842.2"/>
</dbReference>
<dbReference type="SMR" id="Q5PAA8"/>
<dbReference type="GeneID" id="7398077"/>
<dbReference type="KEGG" id="ama:AM856"/>
<dbReference type="PATRIC" id="fig|320483.3.peg.735"/>
<dbReference type="HOGENOM" id="CLU_029848_0_0_5"/>
<dbReference type="UniPathway" id="UPA00075">
    <property type="reaction ID" value="UER00335"/>
</dbReference>
<dbReference type="GO" id="GO:0005737">
    <property type="term" value="C:cytoplasm"/>
    <property type="evidence" value="ECO:0007669"/>
    <property type="project" value="UniProtKB-SubCell"/>
</dbReference>
<dbReference type="GO" id="GO:0004019">
    <property type="term" value="F:adenylosuccinate synthase activity"/>
    <property type="evidence" value="ECO:0007669"/>
    <property type="project" value="UniProtKB-UniRule"/>
</dbReference>
<dbReference type="GO" id="GO:0005525">
    <property type="term" value="F:GTP binding"/>
    <property type="evidence" value="ECO:0007669"/>
    <property type="project" value="UniProtKB-UniRule"/>
</dbReference>
<dbReference type="GO" id="GO:0000287">
    <property type="term" value="F:magnesium ion binding"/>
    <property type="evidence" value="ECO:0007669"/>
    <property type="project" value="UniProtKB-UniRule"/>
</dbReference>
<dbReference type="GO" id="GO:0044208">
    <property type="term" value="P:'de novo' AMP biosynthetic process"/>
    <property type="evidence" value="ECO:0007669"/>
    <property type="project" value="UniProtKB-UniRule"/>
</dbReference>
<dbReference type="GO" id="GO:0046040">
    <property type="term" value="P:IMP metabolic process"/>
    <property type="evidence" value="ECO:0007669"/>
    <property type="project" value="TreeGrafter"/>
</dbReference>
<dbReference type="CDD" id="cd03108">
    <property type="entry name" value="AdSS"/>
    <property type="match status" value="1"/>
</dbReference>
<dbReference type="FunFam" id="1.10.300.10:FF:000001">
    <property type="entry name" value="Adenylosuccinate synthetase"/>
    <property type="match status" value="1"/>
</dbReference>
<dbReference type="FunFam" id="3.90.170.10:FF:000001">
    <property type="entry name" value="Adenylosuccinate synthetase"/>
    <property type="match status" value="1"/>
</dbReference>
<dbReference type="Gene3D" id="3.40.440.10">
    <property type="entry name" value="Adenylosuccinate Synthetase, subunit A, domain 1"/>
    <property type="match status" value="1"/>
</dbReference>
<dbReference type="Gene3D" id="1.10.300.10">
    <property type="entry name" value="Adenylosuccinate Synthetase, subunit A, domain 2"/>
    <property type="match status" value="1"/>
</dbReference>
<dbReference type="Gene3D" id="3.90.170.10">
    <property type="entry name" value="Adenylosuccinate Synthetase, subunit A, domain 3"/>
    <property type="match status" value="1"/>
</dbReference>
<dbReference type="HAMAP" id="MF_00011">
    <property type="entry name" value="Adenylosucc_synth"/>
    <property type="match status" value="1"/>
</dbReference>
<dbReference type="InterPro" id="IPR018220">
    <property type="entry name" value="Adenylosuccin_syn_GTP-bd"/>
</dbReference>
<dbReference type="InterPro" id="IPR033128">
    <property type="entry name" value="Adenylosuccin_syn_Lys_AS"/>
</dbReference>
<dbReference type="InterPro" id="IPR042109">
    <property type="entry name" value="Adenylosuccinate_synth_dom1"/>
</dbReference>
<dbReference type="InterPro" id="IPR042110">
    <property type="entry name" value="Adenylosuccinate_synth_dom2"/>
</dbReference>
<dbReference type="InterPro" id="IPR042111">
    <property type="entry name" value="Adenylosuccinate_synth_dom3"/>
</dbReference>
<dbReference type="InterPro" id="IPR001114">
    <property type="entry name" value="Adenylosuccinate_synthetase"/>
</dbReference>
<dbReference type="InterPro" id="IPR027417">
    <property type="entry name" value="P-loop_NTPase"/>
</dbReference>
<dbReference type="NCBIfam" id="NF002223">
    <property type="entry name" value="PRK01117.1"/>
    <property type="match status" value="1"/>
</dbReference>
<dbReference type="NCBIfam" id="TIGR00184">
    <property type="entry name" value="purA"/>
    <property type="match status" value="1"/>
</dbReference>
<dbReference type="PANTHER" id="PTHR11846">
    <property type="entry name" value="ADENYLOSUCCINATE SYNTHETASE"/>
    <property type="match status" value="1"/>
</dbReference>
<dbReference type="PANTHER" id="PTHR11846:SF0">
    <property type="entry name" value="ADENYLOSUCCINATE SYNTHETASE"/>
    <property type="match status" value="1"/>
</dbReference>
<dbReference type="Pfam" id="PF00709">
    <property type="entry name" value="Adenylsucc_synt"/>
    <property type="match status" value="1"/>
</dbReference>
<dbReference type="SMART" id="SM00788">
    <property type="entry name" value="Adenylsucc_synt"/>
    <property type="match status" value="1"/>
</dbReference>
<dbReference type="SUPFAM" id="SSF52540">
    <property type="entry name" value="P-loop containing nucleoside triphosphate hydrolases"/>
    <property type="match status" value="1"/>
</dbReference>
<dbReference type="PROSITE" id="PS01266">
    <property type="entry name" value="ADENYLOSUCCIN_SYN_1"/>
    <property type="match status" value="1"/>
</dbReference>
<dbReference type="PROSITE" id="PS00513">
    <property type="entry name" value="ADENYLOSUCCIN_SYN_2"/>
    <property type="match status" value="1"/>
</dbReference>
<reference key="1">
    <citation type="journal article" date="2005" name="Proc. Natl. Acad. Sci. U.S.A.">
        <title>Complete genome sequencing of Anaplasma marginale reveals that the surface is skewed to two superfamilies of outer membrane proteins.</title>
        <authorList>
            <person name="Brayton K.A."/>
            <person name="Kappmeyer L.S."/>
            <person name="Herndon D.R."/>
            <person name="Dark M.J."/>
            <person name="Tibbals D.L."/>
            <person name="Palmer G.H."/>
            <person name="McGuire T.C."/>
            <person name="Knowles D.P. Jr."/>
        </authorList>
    </citation>
    <scope>NUCLEOTIDE SEQUENCE [LARGE SCALE GENOMIC DNA]</scope>
    <source>
        <strain>St. Maries</strain>
    </source>
</reference>
<protein>
    <recommendedName>
        <fullName evidence="1">Adenylosuccinate synthetase</fullName>
        <shortName evidence="1">AMPSase</shortName>
        <shortName evidence="1">AdSS</shortName>
        <ecNumber evidence="1">6.3.4.4</ecNumber>
    </recommendedName>
    <alternativeName>
        <fullName evidence="1">IMP--aspartate ligase</fullName>
    </alternativeName>
</protein>
<accession>Q5PAA8</accession>
<proteinExistence type="inferred from homology"/>
<keyword id="KW-0963">Cytoplasm</keyword>
<keyword id="KW-0342">GTP-binding</keyword>
<keyword id="KW-0436">Ligase</keyword>
<keyword id="KW-0460">Magnesium</keyword>
<keyword id="KW-0479">Metal-binding</keyword>
<keyword id="KW-0547">Nucleotide-binding</keyword>
<keyword id="KW-0658">Purine biosynthesis</keyword>
<gene>
    <name evidence="1" type="primary">purA</name>
    <name type="ordered locus">AM856</name>
</gene>
<sequence>MASIVVVGLQWGDEGKGKIVDWLSVSADAVVRFQGGNNAGHTVVADGRVYKLSLLPTSVLRQNKLSMIGSGVALDPYALVREVDSLKDSGIFLDPDSLCLSESCPLVLSVHRDADSIMEEMRGNESIGTTCMGIGPCYEDKVGRRAIRLCDLLDETSLYDKVLCLLSYHNLLRRATNRREVTPHEIMDELTQIAPKVLPFMKPVPEIIVSLIKQGKTVLFEGAQGALLDIDHGTYPYVTSSNTVAGYVRVGCGVGALGDMRVLGLAKAYTTRVGNGPFATEQTGTVGDAMFERGREVGTVTNRVRRCGWFDAVSVRQAALSSGASEMVITKLDVLDTIDEIKVCTKYRCGEESYDYLPAASHIQNRLEPVYETLPGWRTSTLGAVSRSDLPENAVSYISRLEELVGVPVSLVSTGPERNHIVPMNP</sequence>
<feature type="chain" id="PRO_0000224248" description="Adenylosuccinate synthetase">
    <location>
        <begin position="1"/>
        <end position="426"/>
    </location>
</feature>
<feature type="active site" description="Proton acceptor" evidence="1">
    <location>
        <position position="13"/>
    </location>
</feature>
<feature type="active site" description="Proton donor" evidence="1">
    <location>
        <position position="41"/>
    </location>
</feature>
<feature type="binding site" evidence="1">
    <location>
        <begin position="12"/>
        <end position="18"/>
    </location>
    <ligand>
        <name>GTP</name>
        <dbReference type="ChEBI" id="CHEBI:37565"/>
    </ligand>
</feature>
<feature type="binding site" description="in other chain" evidence="1">
    <location>
        <begin position="13"/>
        <end position="16"/>
    </location>
    <ligand>
        <name>IMP</name>
        <dbReference type="ChEBI" id="CHEBI:58053"/>
        <note>ligand shared between dimeric partners</note>
    </ligand>
</feature>
<feature type="binding site" evidence="1">
    <location>
        <position position="13"/>
    </location>
    <ligand>
        <name>Mg(2+)</name>
        <dbReference type="ChEBI" id="CHEBI:18420"/>
    </ligand>
</feature>
<feature type="binding site" description="in other chain" evidence="1">
    <location>
        <begin position="38"/>
        <end position="41"/>
    </location>
    <ligand>
        <name>IMP</name>
        <dbReference type="ChEBI" id="CHEBI:58053"/>
        <note>ligand shared between dimeric partners</note>
    </ligand>
</feature>
<feature type="binding site" evidence="1">
    <location>
        <begin position="40"/>
        <end position="42"/>
    </location>
    <ligand>
        <name>GTP</name>
        <dbReference type="ChEBI" id="CHEBI:37565"/>
    </ligand>
</feature>
<feature type="binding site" evidence="1">
    <location>
        <position position="40"/>
    </location>
    <ligand>
        <name>Mg(2+)</name>
        <dbReference type="ChEBI" id="CHEBI:18420"/>
    </ligand>
</feature>
<feature type="binding site" description="in other chain" evidence="1">
    <location>
        <position position="130"/>
    </location>
    <ligand>
        <name>IMP</name>
        <dbReference type="ChEBI" id="CHEBI:58053"/>
        <note>ligand shared between dimeric partners</note>
    </ligand>
</feature>
<feature type="binding site" evidence="1">
    <location>
        <position position="144"/>
    </location>
    <ligand>
        <name>IMP</name>
        <dbReference type="ChEBI" id="CHEBI:58053"/>
        <note>ligand shared between dimeric partners</note>
    </ligand>
</feature>
<feature type="binding site" description="in other chain" evidence="1">
    <location>
        <position position="224"/>
    </location>
    <ligand>
        <name>IMP</name>
        <dbReference type="ChEBI" id="CHEBI:58053"/>
        <note>ligand shared between dimeric partners</note>
    </ligand>
</feature>
<feature type="binding site" description="in other chain" evidence="1">
    <location>
        <position position="239"/>
    </location>
    <ligand>
        <name>IMP</name>
        <dbReference type="ChEBI" id="CHEBI:58053"/>
        <note>ligand shared between dimeric partners</note>
    </ligand>
</feature>
<feature type="binding site" evidence="1">
    <location>
        <begin position="299"/>
        <end position="305"/>
    </location>
    <ligand>
        <name>substrate</name>
    </ligand>
</feature>
<feature type="binding site" description="in other chain" evidence="1">
    <location>
        <position position="303"/>
    </location>
    <ligand>
        <name>IMP</name>
        <dbReference type="ChEBI" id="CHEBI:58053"/>
        <note>ligand shared between dimeric partners</note>
    </ligand>
</feature>
<feature type="binding site" evidence="1">
    <location>
        <position position="305"/>
    </location>
    <ligand>
        <name>GTP</name>
        <dbReference type="ChEBI" id="CHEBI:37565"/>
    </ligand>
</feature>
<feature type="binding site" evidence="1">
    <location>
        <begin position="331"/>
        <end position="333"/>
    </location>
    <ligand>
        <name>GTP</name>
        <dbReference type="ChEBI" id="CHEBI:37565"/>
    </ligand>
</feature>
<feature type="binding site" evidence="1">
    <location>
        <begin position="413"/>
        <end position="415"/>
    </location>
    <ligand>
        <name>GTP</name>
        <dbReference type="ChEBI" id="CHEBI:37565"/>
    </ligand>
</feature>